<gene>
    <name evidence="1" type="primary">gpsB</name>
    <name type="ordered locus">LSEI_1478</name>
</gene>
<reference key="1">
    <citation type="journal article" date="2006" name="Proc. Natl. Acad. Sci. U.S.A.">
        <title>Comparative genomics of the lactic acid bacteria.</title>
        <authorList>
            <person name="Makarova K.S."/>
            <person name="Slesarev A."/>
            <person name="Wolf Y.I."/>
            <person name="Sorokin A."/>
            <person name="Mirkin B."/>
            <person name="Koonin E.V."/>
            <person name="Pavlov A."/>
            <person name="Pavlova N."/>
            <person name="Karamychev V."/>
            <person name="Polouchine N."/>
            <person name="Shakhova V."/>
            <person name="Grigoriev I."/>
            <person name="Lou Y."/>
            <person name="Rohksar D."/>
            <person name="Lucas S."/>
            <person name="Huang K."/>
            <person name="Goodstein D.M."/>
            <person name="Hawkins T."/>
            <person name="Plengvidhya V."/>
            <person name="Welker D."/>
            <person name="Hughes J."/>
            <person name="Goh Y."/>
            <person name="Benson A."/>
            <person name="Baldwin K."/>
            <person name="Lee J.-H."/>
            <person name="Diaz-Muniz I."/>
            <person name="Dosti B."/>
            <person name="Smeianov V."/>
            <person name="Wechter W."/>
            <person name="Barabote R."/>
            <person name="Lorca G."/>
            <person name="Altermann E."/>
            <person name="Barrangou R."/>
            <person name="Ganesan B."/>
            <person name="Xie Y."/>
            <person name="Rawsthorne H."/>
            <person name="Tamir D."/>
            <person name="Parker C."/>
            <person name="Breidt F."/>
            <person name="Broadbent J.R."/>
            <person name="Hutkins R."/>
            <person name="O'Sullivan D."/>
            <person name="Steele J."/>
            <person name="Unlu G."/>
            <person name="Saier M.H. Jr."/>
            <person name="Klaenhammer T."/>
            <person name="Richardson P."/>
            <person name="Kozyavkin S."/>
            <person name="Weimer B.C."/>
            <person name="Mills D.A."/>
        </authorList>
    </citation>
    <scope>NUCLEOTIDE SEQUENCE [LARGE SCALE GENOMIC DNA]</scope>
    <source>
        <strain>ATCC 334 / BCRC 17002 / CCUG 31169 / CIP 107868 / KCTC 3260 / NRRL B-441</strain>
    </source>
</reference>
<accession>Q038W7</accession>
<name>GPSB_LACP3</name>
<proteinExistence type="inferred from homology"/>
<feature type="chain" id="PRO_0000337920" description="Cell cycle protein GpsB">
    <location>
        <begin position="1"/>
        <end position="131"/>
    </location>
</feature>
<feature type="region of interest" description="Disordered" evidence="2">
    <location>
        <begin position="111"/>
        <end position="131"/>
    </location>
</feature>
<feature type="coiled-coil region" evidence="1">
    <location>
        <begin position="39"/>
        <end position="76"/>
    </location>
</feature>
<feature type="compositionally biased region" description="Basic and acidic residues" evidence="2">
    <location>
        <begin position="117"/>
        <end position="131"/>
    </location>
</feature>
<sequence length="131" mass="15051">MDSNKETKFSIQYGPKDILDKKFKNKVRGYDPDEVDEFLDGIIRDYEAFTNEIDRLKEENTKLFSRVDELTKQLSVSKNVSAQTPQTNAAATNYDILKRLSNLERHVFGSKLSDSSVDNHDDGNHSDVDQY</sequence>
<keyword id="KW-0131">Cell cycle</keyword>
<keyword id="KW-0132">Cell division</keyword>
<keyword id="KW-0133">Cell shape</keyword>
<keyword id="KW-0175">Coiled coil</keyword>
<keyword id="KW-0963">Cytoplasm</keyword>
<keyword id="KW-1185">Reference proteome</keyword>
<protein>
    <recommendedName>
        <fullName evidence="1">Cell cycle protein GpsB</fullName>
    </recommendedName>
    <alternativeName>
        <fullName evidence="1">Guiding PBP1-shuttling protein</fullName>
    </alternativeName>
</protein>
<dbReference type="EMBL" id="CP000423">
    <property type="protein sequence ID" value="ABJ70255.1"/>
    <property type="molecule type" value="Genomic_DNA"/>
</dbReference>
<dbReference type="RefSeq" id="WP_003565600.1">
    <property type="nucleotide sequence ID" value="NC_008526.1"/>
</dbReference>
<dbReference type="RefSeq" id="YP_806697.1">
    <property type="nucleotide sequence ID" value="NC_008526.1"/>
</dbReference>
<dbReference type="SMR" id="Q038W7"/>
<dbReference type="STRING" id="321967.LSEI_1478"/>
<dbReference type="PaxDb" id="321967-LSEI_1478"/>
<dbReference type="GeneID" id="57090142"/>
<dbReference type="KEGG" id="lca:LSEI_1478"/>
<dbReference type="PATRIC" id="fig|321967.11.peg.1458"/>
<dbReference type="HOGENOM" id="CLU_140309_1_0_9"/>
<dbReference type="Proteomes" id="UP000001651">
    <property type="component" value="Chromosome"/>
</dbReference>
<dbReference type="GO" id="GO:0005737">
    <property type="term" value="C:cytoplasm"/>
    <property type="evidence" value="ECO:0007669"/>
    <property type="project" value="UniProtKB-SubCell"/>
</dbReference>
<dbReference type="GO" id="GO:0051301">
    <property type="term" value="P:cell division"/>
    <property type="evidence" value="ECO:0007669"/>
    <property type="project" value="UniProtKB-UniRule"/>
</dbReference>
<dbReference type="GO" id="GO:0008360">
    <property type="term" value="P:regulation of cell shape"/>
    <property type="evidence" value="ECO:0007669"/>
    <property type="project" value="UniProtKB-UniRule"/>
</dbReference>
<dbReference type="Gene3D" id="6.10.250.660">
    <property type="match status" value="1"/>
</dbReference>
<dbReference type="HAMAP" id="MF_02011">
    <property type="entry name" value="GpsB"/>
    <property type="match status" value="1"/>
</dbReference>
<dbReference type="InterPro" id="IPR011229">
    <property type="entry name" value="Cell_cycle_GpsB"/>
</dbReference>
<dbReference type="InterPro" id="IPR019933">
    <property type="entry name" value="DivIVA_domain"/>
</dbReference>
<dbReference type="InterPro" id="IPR007793">
    <property type="entry name" value="DivIVA_fam"/>
</dbReference>
<dbReference type="NCBIfam" id="TIGR03544">
    <property type="entry name" value="DivI1A_domain"/>
    <property type="match status" value="1"/>
</dbReference>
<dbReference type="NCBIfam" id="NF010725">
    <property type="entry name" value="PRK14127.1"/>
    <property type="match status" value="1"/>
</dbReference>
<dbReference type="PANTHER" id="PTHR35794:SF1">
    <property type="entry name" value="CELL CYCLE PROTEIN GPSB"/>
    <property type="match status" value="1"/>
</dbReference>
<dbReference type="PANTHER" id="PTHR35794">
    <property type="entry name" value="CELL DIVISION PROTEIN DIVIVA"/>
    <property type="match status" value="1"/>
</dbReference>
<dbReference type="Pfam" id="PF05103">
    <property type="entry name" value="DivIVA"/>
    <property type="match status" value="1"/>
</dbReference>
<dbReference type="PIRSF" id="PIRSF029938">
    <property type="entry name" value="UCP029938"/>
    <property type="match status" value="1"/>
</dbReference>
<comment type="function">
    <text evidence="1">Divisome component that associates with the complex late in its assembly, after the Z-ring is formed, and is dependent on DivIC and PBP2B for its recruitment to the divisome. Together with EzrA, is a key component of the system that regulates PBP1 localization during cell cycle progression. Its main role could be the removal of PBP1 from the cell pole after pole maturation is completed. Also contributes to the recruitment of PBP1 to the division complex. Not essential for septum formation.</text>
</comment>
<comment type="subunit">
    <text evidence="1">Forms polymers through the coiled coil domains. Interacts with PBP1, MreC and EzrA.</text>
</comment>
<comment type="subcellular location">
    <subcellularLocation>
        <location evidence="1">Cytoplasm</location>
    </subcellularLocation>
    <text evidence="1">Shuttles between the lateral wall and the division site in a cell cycle-dependent manner.</text>
</comment>
<comment type="similarity">
    <text evidence="1">Belongs to the GpsB family.</text>
</comment>
<organism>
    <name type="scientific">Lacticaseibacillus paracasei (strain ATCC 334 / BCRC 17002 / CCUG 31169 / CIP 107868 / KCTC 3260 / NRRL B-441)</name>
    <name type="common">Lactobacillus paracasei</name>
    <dbReference type="NCBI Taxonomy" id="321967"/>
    <lineage>
        <taxon>Bacteria</taxon>
        <taxon>Bacillati</taxon>
        <taxon>Bacillota</taxon>
        <taxon>Bacilli</taxon>
        <taxon>Lactobacillales</taxon>
        <taxon>Lactobacillaceae</taxon>
        <taxon>Lacticaseibacillus</taxon>
    </lineage>
</organism>
<evidence type="ECO:0000255" key="1">
    <source>
        <dbReference type="HAMAP-Rule" id="MF_02011"/>
    </source>
</evidence>
<evidence type="ECO:0000256" key="2">
    <source>
        <dbReference type="SAM" id="MobiDB-lite"/>
    </source>
</evidence>